<gene>
    <name evidence="16 18" type="primary">MEPCE</name>
    <name evidence="15" type="synonym">BCDIN3</name>
</gene>
<protein>
    <recommendedName>
        <fullName evidence="16">7SK snRNA methylphosphate capping enzyme</fullName>
        <shortName evidence="16">MePCE</shortName>
        <ecNumber evidence="5 6 9">2.1.1.-</ecNumber>
    </recommendedName>
    <alternativeName>
        <fullName evidence="15">Bicoid-interacting protein 3 homolog</fullName>
        <shortName evidence="15">Bin3 homolog</shortName>
    </alternativeName>
</protein>
<accession>Q7L2J0</accession>
<accession>B3KP86</accession>
<accession>D6W5V7</accession>
<accession>Q9NPD4</accession>
<dbReference type="EC" id="2.1.1.-" evidence="5 6 9"/>
<dbReference type="EMBL" id="AK055964">
    <property type="protein sequence ID" value="BAG51598.1"/>
    <property type="molecule type" value="mRNA"/>
</dbReference>
<dbReference type="EMBL" id="AC092849">
    <property type="status" value="NOT_ANNOTATED_CDS"/>
    <property type="molecule type" value="Genomic_DNA"/>
</dbReference>
<dbReference type="EMBL" id="CH471091">
    <property type="protein sequence ID" value="EAW76534.1"/>
    <property type="molecule type" value="Genomic_DNA"/>
</dbReference>
<dbReference type="EMBL" id="CH471091">
    <property type="protein sequence ID" value="EAW76535.1"/>
    <property type="molecule type" value="Genomic_DNA"/>
</dbReference>
<dbReference type="EMBL" id="CH471091">
    <property type="protein sequence ID" value="EAW76536.1"/>
    <property type="molecule type" value="Genomic_DNA"/>
</dbReference>
<dbReference type="EMBL" id="CH236956">
    <property type="protein sequence ID" value="EAL23834.1"/>
    <property type="molecule type" value="Genomic_DNA"/>
</dbReference>
<dbReference type="EMBL" id="BC000556">
    <property type="protein sequence ID" value="AAH00556.2"/>
    <property type="molecule type" value="mRNA"/>
</dbReference>
<dbReference type="EMBL" id="BC016396">
    <property type="protein sequence ID" value="AAH16396.1"/>
    <property type="status" value="ALT_INIT"/>
    <property type="molecule type" value="mRNA"/>
</dbReference>
<dbReference type="EMBL" id="BC018935">
    <property type="protein sequence ID" value="AAH18935.2"/>
    <property type="molecule type" value="mRNA"/>
</dbReference>
<dbReference type="EMBL" id="AF264752">
    <property type="protein sequence ID" value="AAF74767.1"/>
    <property type="status" value="ALT_INIT"/>
    <property type="molecule type" value="Genomic_DNA"/>
</dbReference>
<dbReference type="EMBL" id="AK000264">
    <property type="protein sequence ID" value="BAA91040.1"/>
    <property type="status" value="ALT_INIT"/>
    <property type="molecule type" value="mRNA"/>
</dbReference>
<dbReference type="CCDS" id="CCDS55136.1">
    <molecule id="Q7L2J0-2"/>
</dbReference>
<dbReference type="CCDS" id="CCDS5693.1">
    <molecule id="Q7L2J0-1"/>
</dbReference>
<dbReference type="RefSeq" id="NP_001181919.1">
    <molecule id="Q7L2J0-2"/>
    <property type="nucleotide sequence ID" value="NM_001194990.2"/>
</dbReference>
<dbReference type="RefSeq" id="NP_001181920.1">
    <molecule id="Q7L2J0-2"/>
    <property type="nucleotide sequence ID" value="NM_001194991.2"/>
</dbReference>
<dbReference type="RefSeq" id="NP_001181921.1">
    <molecule id="Q7L2J0-2"/>
    <property type="nucleotide sequence ID" value="NM_001194992.2"/>
</dbReference>
<dbReference type="RefSeq" id="NP_001350415.1">
    <molecule id="Q7L2J0-2"/>
    <property type="nucleotide sequence ID" value="NM_001363486.2"/>
</dbReference>
<dbReference type="RefSeq" id="NP_062552.2">
    <molecule id="Q7L2J0-1"/>
    <property type="nucleotide sequence ID" value="NM_019606.5"/>
</dbReference>
<dbReference type="RefSeq" id="XP_011514712.1">
    <property type="nucleotide sequence ID" value="XM_011516410.2"/>
</dbReference>
<dbReference type="RefSeq" id="XP_054214631.1">
    <molecule id="Q7L2J0-2"/>
    <property type="nucleotide sequence ID" value="XM_054358656.1"/>
</dbReference>
<dbReference type="PDB" id="5UNA">
    <property type="method" value="X-ray"/>
    <property type="resolution" value="2.55 A"/>
    <property type="chains" value="A/B/C/D/E/F=400-689"/>
</dbReference>
<dbReference type="PDB" id="6DCB">
    <property type="method" value="X-ray"/>
    <property type="resolution" value="2.00 A"/>
    <property type="chains" value="A=400-689"/>
</dbReference>
<dbReference type="PDB" id="6DCC">
    <property type="method" value="X-ray"/>
    <property type="resolution" value="2.10 A"/>
    <property type="chains" value="A=400-689"/>
</dbReference>
<dbReference type="PDB" id="7SLP">
    <property type="method" value="EM"/>
    <property type="resolution" value="4.10 A"/>
    <property type="chains" value="A=400-689"/>
</dbReference>
<dbReference type="PDB" id="7SLQ">
    <property type="method" value="EM"/>
    <property type="resolution" value="3.70 A"/>
    <property type="chains" value="A=400-689"/>
</dbReference>
<dbReference type="PDBsum" id="5UNA"/>
<dbReference type="PDBsum" id="6DCB"/>
<dbReference type="PDBsum" id="6DCC"/>
<dbReference type="PDBsum" id="7SLP"/>
<dbReference type="PDBsum" id="7SLQ"/>
<dbReference type="EMDB" id="EMD-25197"/>
<dbReference type="EMDB" id="EMD-25198"/>
<dbReference type="SMR" id="Q7L2J0"/>
<dbReference type="BioGRID" id="121122">
    <property type="interactions" value="869"/>
</dbReference>
<dbReference type="CORUM" id="Q7L2J0"/>
<dbReference type="FunCoup" id="Q7L2J0">
    <property type="interactions" value="2738"/>
</dbReference>
<dbReference type="IntAct" id="Q7L2J0">
    <property type="interactions" value="108"/>
</dbReference>
<dbReference type="MINT" id="Q7L2J0"/>
<dbReference type="STRING" id="9606.ENSP00000308546"/>
<dbReference type="GlyGen" id="Q7L2J0">
    <property type="glycosylation" value="3 sites, 1 O-linked glycan (1 site)"/>
</dbReference>
<dbReference type="iPTMnet" id="Q7L2J0"/>
<dbReference type="PhosphoSitePlus" id="Q7L2J0"/>
<dbReference type="SwissPalm" id="Q7L2J0"/>
<dbReference type="BioMuta" id="MEPCE"/>
<dbReference type="DMDM" id="74758999"/>
<dbReference type="jPOST" id="Q7L2J0"/>
<dbReference type="MassIVE" id="Q7L2J0"/>
<dbReference type="PaxDb" id="9606-ENSP00000308546"/>
<dbReference type="PeptideAtlas" id="Q7L2J0"/>
<dbReference type="ProteomicsDB" id="15164"/>
<dbReference type="ProteomicsDB" id="68762">
    <molecule id="Q7L2J0-1"/>
</dbReference>
<dbReference type="Pumba" id="Q7L2J0"/>
<dbReference type="Antibodypedia" id="30703">
    <property type="antibodies" value="199 antibodies from 30 providers"/>
</dbReference>
<dbReference type="DNASU" id="56257"/>
<dbReference type="Ensembl" id="ENST00000310512.4">
    <molecule id="Q7L2J0-1"/>
    <property type="protein sequence ID" value="ENSP00000308546.2"/>
    <property type="gene ID" value="ENSG00000146834.16"/>
</dbReference>
<dbReference type="Ensembl" id="ENST00000414441.5">
    <molecule id="Q7L2J0-2"/>
    <property type="protein sequence ID" value="ENSP00000400875.1"/>
    <property type="gene ID" value="ENSG00000146834.16"/>
</dbReference>
<dbReference type="Ensembl" id="ENST00000479201.2">
    <molecule id="Q7L2J0-2"/>
    <property type="protein sequence ID" value="ENSP00000511704.1"/>
    <property type="gene ID" value="ENSG00000146834.16"/>
</dbReference>
<dbReference type="Ensembl" id="ENST00000497759.2">
    <molecule id="Q7L2J0-2"/>
    <property type="protein sequence ID" value="ENSP00000511703.1"/>
    <property type="gene ID" value="ENSG00000146834.16"/>
</dbReference>
<dbReference type="Ensembl" id="ENST00000695111.1">
    <molecule id="Q7L2J0-2"/>
    <property type="protein sequence ID" value="ENSP00000511702.1"/>
    <property type="gene ID" value="ENSG00000146834.16"/>
</dbReference>
<dbReference type="Ensembl" id="ENST00000715739.1">
    <molecule id="Q7L2J0-1"/>
    <property type="protein sequence ID" value="ENSP00000520510.1"/>
    <property type="gene ID" value="ENSG00000146834.16"/>
</dbReference>
<dbReference type="GeneID" id="56257"/>
<dbReference type="KEGG" id="hsa:56257"/>
<dbReference type="MANE-Select" id="ENST00000310512.4">
    <property type="protein sequence ID" value="ENSP00000308546.2"/>
    <property type="RefSeq nucleotide sequence ID" value="NM_019606.6"/>
    <property type="RefSeq protein sequence ID" value="NP_062552.2"/>
</dbReference>
<dbReference type="UCSC" id="uc003uuv.4">
    <molecule id="Q7L2J0-1"/>
    <property type="organism name" value="human"/>
</dbReference>
<dbReference type="AGR" id="HGNC:20247"/>
<dbReference type="CTD" id="56257"/>
<dbReference type="DisGeNET" id="56257"/>
<dbReference type="GeneCards" id="MEPCE"/>
<dbReference type="HGNC" id="HGNC:20247">
    <property type="gene designation" value="MEPCE"/>
</dbReference>
<dbReference type="HPA" id="ENSG00000146834">
    <property type="expression patterns" value="Low tissue specificity"/>
</dbReference>
<dbReference type="MIM" id="611478">
    <property type="type" value="gene"/>
</dbReference>
<dbReference type="neXtProt" id="NX_Q7L2J0"/>
<dbReference type="OpenTargets" id="ENSG00000146834"/>
<dbReference type="PharmGKB" id="PA162395768"/>
<dbReference type="VEuPathDB" id="HostDB:ENSG00000146834"/>
<dbReference type="eggNOG" id="KOG2899">
    <property type="taxonomic scope" value="Eukaryota"/>
</dbReference>
<dbReference type="GeneTree" id="ENSGT00940000153993"/>
<dbReference type="HOGENOM" id="CLU_004729_2_1_1"/>
<dbReference type="InParanoid" id="Q7L2J0"/>
<dbReference type="OMA" id="PVSMAIC"/>
<dbReference type="OrthoDB" id="10017101at2759"/>
<dbReference type="PAN-GO" id="Q7L2J0">
    <property type="GO annotations" value="4 GO annotations based on evolutionary models"/>
</dbReference>
<dbReference type="PhylomeDB" id="Q7L2J0"/>
<dbReference type="TreeFam" id="TF324061"/>
<dbReference type="PathwayCommons" id="Q7L2J0"/>
<dbReference type="SignaLink" id="Q7L2J0"/>
<dbReference type="SIGNOR" id="Q7L2J0"/>
<dbReference type="BioGRID-ORCS" id="56257">
    <property type="hits" value="787 hits in 1131 CRISPR screens"/>
</dbReference>
<dbReference type="ChiTaRS" id="MEPCE">
    <property type="organism name" value="human"/>
</dbReference>
<dbReference type="GenomeRNAi" id="56257"/>
<dbReference type="Pharos" id="Q7L2J0">
    <property type="development level" value="Tbio"/>
</dbReference>
<dbReference type="PRO" id="PR:Q7L2J0"/>
<dbReference type="Proteomes" id="UP000005640">
    <property type="component" value="Chromosome 7"/>
</dbReference>
<dbReference type="RNAct" id="Q7L2J0">
    <property type="molecule type" value="protein"/>
</dbReference>
<dbReference type="Bgee" id="ENSG00000146834">
    <property type="expression patterns" value="Expressed in left testis and 203 other cell types or tissues"/>
</dbReference>
<dbReference type="GO" id="GO:0120259">
    <property type="term" value="C:7SK snRNP"/>
    <property type="evidence" value="ECO:0000314"/>
    <property type="project" value="FlyBase"/>
</dbReference>
<dbReference type="GO" id="GO:0005634">
    <property type="term" value="C:nucleus"/>
    <property type="evidence" value="ECO:0000314"/>
    <property type="project" value="UniProtKB"/>
</dbReference>
<dbReference type="GO" id="GO:1990904">
    <property type="term" value="C:ribonucleoprotein complex"/>
    <property type="evidence" value="ECO:0000314"/>
    <property type="project" value="UniProtKB"/>
</dbReference>
<dbReference type="GO" id="GO:0097322">
    <property type="term" value="F:7SK snRNA binding"/>
    <property type="evidence" value="ECO:0000314"/>
    <property type="project" value="FlyBase"/>
</dbReference>
<dbReference type="GO" id="GO:0008171">
    <property type="term" value="F:O-methyltransferase activity"/>
    <property type="evidence" value="ECO:0000318"/>
    <property type="project" value="GO_Central"/>
</dbReference>
<dbReference type="GO" id="GO:1990276">
    <property type="term" value="F:RNA 5'-gamma-phosphate methyltransferase activity"/>
    <property type="evidence" value="ECO:0000314"/>
    <property type="project" value="UniProtKB"/>
</dbReference>
<dbReference type="GO" id="GO:0003723">
    <property type="term" value="F:RNA binding"/>
    <property type="evidence" value="ECO:0000353"/>
    <property type="project" value="DisProt"/>
</dbReference>
<dbReference type="GO" id="GO:0008173">
    <property type="term" value="F:RNA methyltransferase activity"/>
    <property type="evidence" value="ECO:0000314"/>
    <property type="project" value="UniProtKB"/>
</dbReference>
<dbReference type="GO" id="GO:0008757">
    <property type="term" value="F:S-adenosylmethionine-dependent methyltransferase activity"/>
    <property type="evidence" value="ECO:0000314"/>
    <property type="project" value="UniProtKB"/>
</dbReference>
<dbReference type="GO" id="GO:0017069">
    <property type="term" value="F:snRNA binding"/>
    <property type="evidence" value="ECO:0000318"/>
    <property type="project" value="GO_Central"/>
</dbReference>
<dbReference type="GO" id="GO:0000122">
    <property type="term" value="P:negative regulation of transcription by RNA polymerase II"/>
    <property type="evidence" value="ECO:0007669"/>
    <property type="project" value="Ensembl"/>
</dbReference>
<dbReference type="GO" id="GO:1900087">
    <property type="term" value="P:positive regulation of G1/S transition of mitotic cell cycle"/>
    <property type="evidence" value="ECO:0007669"/>
    <property type="project" value="Ensembl"/>
</dbReference>
<dbReference type="GO" id="GO:1904871">
    <property type="term" value="P:positive regulation of protein localization to Cajal body"/>
    <property type="evidence" value="ECO:0000314"/>
    <property type="project" value="UniProtKB"/>
</dbReference>
<dbReference type="GO" id="GO:1905382">
    <property type="term" value="P:positive regulation of snRNA transcription by RNA polymerase II"/>
    <property type="evidence" value="ECO:0000314"/>
    <property type="project" value="UniProtKB"/>
</dbReference>
<dbReference type="GO" id="GO:0001510">
    <property type="term" value="P:RNA methylation"/>
    <property type="evidence" value="ECO:0000314"/>
    <property type="project" value="UniProtKB"/>
</dbReference>
<dbReference type="GO" id="GO:0016073">
    <property type="term" value="P:snRNA metabolic process"/>
    <property type="evidence" value="ECO:0000314"/>
    <property type="project" value="UniProtKB"/>
</dbReference>
<dbReference type="GO" id="GO:0040031">
    <property type="term" value="P:snRNA modification"/>
    <property type="evidence" value="ECO:0000314"/>
    <property type="project" value="UniProtKB"/>
</dbReference>
<dbReference type="CDD" id="cd02440">
    <property type="entry name" value="AdoMet_MTases"/>
    <property type="match status" value="1"/>
</dbReference>
<dbReference type="DisProt" id="DP02832"/>
<dbReference type="Gene3D" id="3.40.50.150">
    <property type="entry name" value="Vaccinia Virus protein VP39"/>
    <property type="match status" value="1"/>
</dbReference>
<dbReference type="InterPro" id="IPR039772">
    <property type="entry name" value="Bin3-like"/>
</dbReference>
<dbReference type="InterPro" id="IPR010675">
    <property type="entry name" value="Bin3_C"/>
</dbReference>
<dbReference type="InterPro" id="IPR024160">
    <property type="entry name" value="BIN3_SAM-bd_dom"/>
</dbReference>
<dbReference type="InterPro" id="IPR029063">
    <property type="entry name" value="SAM-dependent_MTases_sf"/>
</dbReference>
<dbReference type="PANTHER" id="PTHR12315:SF0">
    <property type="entry name" value="7SK SNRNA METHYLPHOSPHATE CAPPING ENZYME"/>
    <property type="match status" value="1"/>
</dbReference>
<dbReference type="PANTHER" id="PTHR12315">
    <property type="entry name" value="BICOID-INTERACTING PROTEIN RELATED"/>
    <property type="match status" value="1"/>
</dbReference>
<dbReference type="Pfam" id="PF06859">
    <property type="entry name" value="Bin3"/>
    <property type="match status" value="1"/>
</dbReference>
<dbReference type="SUPFAM" id="SSF53335">
    <property type="entry name" value="S-adenosyl-L-methionine-dependent methyltransferases"/>
    <property type="match status" value="1"/>
</dbReference>
<dbReference type="PROSITE" id="PS51515">
    <property type="entry name" value="BIN3_SAM"/>
    <property type="match status" value="1"/>
</dbReference>
<sequence>MIEMAAEKEPFLVPAPPPPLKDESGGGGGPTVPPHQEAASGELRGGTERGPGRCAPSAGSPAAAVGRESPGAAATSSSGPQAQQHRGGGPQAQSHGEARLSDPPGRAAPPDVGEERRGGGGTELGPPAPPRPRNGYQPHRPPGGGGGKRRNSCNVGGGGGGFKHPAFKRRRRVNSDCDSVLPSNFLLGGNIFDPLNLNSLLDEEVSRTLNAETPKSSPLPAKGRDPVEILIPKDITDPLSLNTCTDEGHVVLASPLKTGRKRHRHRGQHHQQQQAAGGSESHPVPPTAPLTPLLHGEGASQQPRHRGQNRDAPQPYELNTAINCRDEVVSPLPSALQGPSGSLSAPPAASVISAPPSSSSRHRKRRRTSSKSEAGARGGGQGSKEKGRGSWGGRHHHHHPLPAAGFKKQQRKFQYGNYCKYYGYRNPSCEDGRLRVLKPEWFRGRDVLDLGCNVGHLTLSIACKWGPSRMVGLDIDSRLIHSARQNIRHYLSEELRLPPQTLEGDPGAEGEEGTTTVRKRSCFPASLTASRGPIAAPQVPLDGADTSVFPNNVVFVTGNYVLDRDDLVEAQTPEYDVVLCLSLTKWVHLNWGDEGLKRMFRRIYRHLRPGGILVLEPQPWSSYGKRKTLTETIYKNYYRIQLKPEQFSSYLTSPDVGFSSYELVATPHNTSKGFQRPVYLFHKARSPSH</sequence>
<feature type="chain" id="PRO_0000289262" description="7SK snRNA methylphosphate capping enzyme">
    <location>
        <begin position="1"/>
        <end position="689"/>
    </location>
</feature>
<feature type="domain" description="Bin3-type SAM" evidence="2">
    <location>
        <begin position="431"/>
        <end position="686"/>
    </location>
</feature>
<feature type="region of interest" description="Disordered" evidence="3">
    <location>
        <begin position="1"/>
        <end position="167"/>
    </location>
</feature>
<feature type="region of interest" description="Disordered" evidence="3">
    <location>
        <begin position="258"/>
        <end position="314"/>
    </location>
</feature>
<feature type="region of interest" description="Disordered" evidence="3">
    <location>
        <begin position="332"/>
        <end position="407"/>
    </location>
</feature>
<feature type="compositionally biased region" description="Basic and acidic residues" evidence="3">
    <location>
        <begin position="1"/>
        <end position="10"/>
    </location>
</feature>
<feature type="compositionally biased region" description="Low complexity" evidence="3">
    <location>
        <begin position="52"/>
        <end position="84"/>
    </location>
</feature>
<feature type="compositionally biased region" description="Basic residues" evidence="3">
    <location>
        <begin position="258"/>
        <end position="269"/>
    </location>
</feature>
<feature type="compositionally biased region" description="Low complexity" evidence="3">
    <location>
        <begin position="338"/>
        <end position="359"/>
    </location>
</feature>
<feature type="compositionally biased region" description="Basic residues" evidence="3">
    <location>
        <begin position="360"/>
        <end position="369"/>
    </location>
</feature>
<feature type="binding site" evidence="9 20 21">
    <location>
        <position position="422"/>
    </location>
    <ligand>
        <name>S-adenosyl-L-methionine</name>
        <dbReference type="ChEBI" id="CHEBI:59789"/>
    </ligand>
</feature>
<feature type="binding site" evidence="9 20 21">
    <location>
        <position position="433"/>
    </location>
    <ligand>
        <name>S-adenosyl-L-methionine</name>
        <dbReference type="ChEBI" id="CHEBI:59789"/>
    </ligand>
</feature>
<feature type="binding site" evidence="9 13 19 20 21">
    <location>
        <begin position="451"/>
        <end position="453"/>
    </location>
    <ligand>
        <name>S-adenosyl-L-methionine</name>
        <dbReference type="ChEBI" id="CHEBI:59789"/>
    </ligand>
</feature>
<feature type="binding site" evidence="9 13 19 20 21">
    <location>
        <begin position="474"/>
        <end position="475"/>
    </location>
    <ligand>
        <name>S-adenosyl-L-methionine</name>
        <dbReference type="ChEBI" id="CHEBI:59789"/>
    </ligand>
</feature>
<feature type="binding site" evidence="9 13 19 20 21">
    <location>
        <begin position="559"/>
        <end position="560"/>
    </location>
    <ligand>
        <name>S-adenosyl-L-methionine</name>
        <dbReference type="ChEBI" id="CHEBI:59789"/>
    </ligand>
</feature>
<feature type="binding site" evidence="9 13 19 20 21">
    <location>
        <position position="581"/>
    </location>
    <ligand>
        <name>S-adenosyl-L-methionine</name>
        <dbReference type="ChEBI" id="CHEBI:59789"/>
    </ligand>
</feature>
<feature type="modified residue" description="N-acetylmethionine" evidence="28">
    <location>
        <position position="1"/>
    </location>
</feature>
<feature type="modified residue" description="Phosphoserine" evidence="26">
    <location>
        <position position="57"/>
    </location>
</feature>
<feature type="modified residue" description="Phosphoserine" evidence="25 26 32 33">
    <location>
        <position position="60"/>
    </location>
</feature>
<feature type="modified residue" description="Phosphoserine" evidence="23 25 26 30 32 33">
    <location>
        <position position="69"/>
    </location>
</feature>
<feature type="modified residue" description="Phosphoserine" evidence="30 32">
    <location>
        <position position="101"/>
    </location>
</feature>
<feature type="modified residue" description="Omega-N-methylarginine" evidence="1">
    <location>
        <position position="117"/>
    </location>
</feature>
<feature type="modified residue" description="Phosphoserine" evidence="12 26 32 33">
    <location>
        <position position="152"/>
    </location>
</feature>
<feature type="modified residue" description="Phosphoserine" evidence="23 24 26">
    <location>
        <position position="175"/>
    </location>
</feature>
<feature type="modified residue" description="Phosphoserine" evidence="24">
    <location>
        <position position="179"/>
    </location>
</feature>
<feature type="modified residue" description="Phosphothreonine" evidence="25 29 30 31 32 33">
    <location>
        <position position="213"/>
    </location>
</feature>
<feature type="modified residue" description="Phosphoserine" evidence="25 30 32">
    <location>
        <position position="216"/>
    </location>
</feature>
<feature type="modified residue" description="Phosphoserine" evidence="22 25 30 32 33">
    <location>
        <position position="217"/>
    </location>
</feature>
<feature type="modified residue" description="Phosphoserine" evidence="25 26 27 30 32 33">
    <location>
        <position position="254"/>
    </location>
</feature>
<feature type="modified residue" description="Phosphothreonine" evidence="33">
    <location>
        <position position="291"/>
    </location>
</feature>
<feature type="modified residue" description="Phosphoserine" evidence="26">
    <location>
        <position position="330"/>
    </location>
</feature>
<feature type="modified residue" description="Phosphoserine" evidence="33">
    <location>
        <position position="344"/>
    </location>
</feature>
<feature type="modified residue" description="Phosphoserine" evidence="30">
    <location>
        <position position="390"/>
    </location>
</feature>
<feature type="cross-link" description="Glycyl lysine isopeptide (Lys-Gly) (interchain with G-Cter in SUMO2)" evidence="34">
    <location>
        <position position="643"/>
    </location>
</feature>
<feature type="splice variant" id="VSP_044512" description="In isoform 2." evidence="14">
    <location>
        <begin position="1"/>
        <end position="469"/>
    </location>
</feature>
<feature type="mutagenesis site" description="Promotes RNA polymerase II transcription pause-release." evidence="12">
    <original>S</original>
    <variation>A</variation>
    <location>
        <position position="152"/>
    </location>
</feature>
<feature type="mutagenesis site" description="Nearly abolished methyltransferase activity." evidence="9">
    <original>Y</original>
    <variation>A</variation>
    <location>
        <position position="421"/>
    </location>
</feature>
<feature type="mutagenesis site" description="Abolished methyltransferase activity and reduced interaction with LARP7, without affecting interaction with P-TEFb." evidence="6">
    <original>VLD</original>
    <variation>AAA</variation>
    <location>
        <begin position="447"/>
        <end position="449"/>
    </location>
</feature>
<feature type="mutagenesis site" description="Decreased methyltransferase activity." evidence="9">
    <original>K</original>
    <variation>A</variation>
    <location>
        <position position="585"/>
    </location>
</feature>
<feature type="mutagenesis site" description="Strongly reduced methyltransferase activity." evidence="9">
    <original>F</original>
    <variation>A</variation>
    <location>
        <position position="674"/>
    </location>
</feature>
<feature type="sequence conflict" description="In Ref. 1; BAG51598." evidence="17" ref="1">
    <original>Y</original>
    <variation>N</variation>
    <location>
        <position position="661"/>
    </location>
</feature>
<feature type="helix" evidence="35">
    <location>
        <begin position="421"/>
        <end position="425"/>
    </location>
</feature>
<feature type="helix" evidence="35">
    <location>
        <begin position="432"/>
        <end position="435"/>
    </location>
</feature>
<feature type="helix" evidence="35">
    <location>
        <begin position="439"/>
        <end position="441"/>
    </location>
</feature>
<feature type="turn" evidence="35">
    <location>
        <begin position="442"/>
        <end position="444"/>
    </location>
</feature>
<feature type="strand" evidence="35">
    <location>
        <begin position="446"/>
        <end position="450"/>
    </location>
</feature>
<feature type="helix" evidence="35">
    <location>
        <begin position="456"/>
        <end position="464"/>
    </location>
</feature>
<feature type="strand" evidence="35">
    <location>
        <begin position="468"/>
        <end position="475"/>
    </location>
</feature>
<feature type="helix" evidence="35">
    <location>
        <begin position="477"/>
        <end position="486"/>
    </location>
</feature>
<feature type="helix" evidence="35">
    <location>
        <begin position="487"/>
        <end position="490"/>
    </location>
</feature>
<feature type="turn" evidence="35">
    <location>
        <begin position="549"/>
        <end position="552"/>
    </location>
</feature>
<feature type="strand" evidence="35">
    <location>
        <begin position="553"/>
        <end position="557"/>
    </location>
</feature>
<feature type="helix" evidence="35">
    <location>
        <begin position="565"/>
        <end position="569"/>
    </location>
</feature>
<feature type="strand" evidence="35">
    <location>
        <begin position="575"/>
        <end position="582"/>
    </location>
</feature>
<feature type="helix" evidence="35">
    <location>
        <begin position="584"/>
        <end position="606"/>
    </location>
</feature>
<feature type="strand" evidence="35">
    <location>
        <begin position="607"/>
        <end position="616"/>
    </location>
</feature>
<feature type="helix" evidence="35">
    <location>
        <begin position="620"/>
        <end position="622"/>
    </location>
</feature>
<feature type="helix" evidence="35">
    <location>
        <begin position="624"/>
        <end position="626"/>
    </location>
</feature>
<feature type="helix" evidence="35">
    <location>
        <begin position="631"/>
        <end position="639"/>
    </location>
</feature>
<feature type="helix" evidence="35">
    <location>
        <begin position="644"/>
        <end position="646"/>
    </location>
</feature>
<feature type="helix" evidence="35">
    <location>
        <begin position="647"/>
        <end position="651"/>
    </location>
</feature>
<feature type="turn" evidence="35">
    <location>
        <begin position="654"/>
        <end position="656"/>
    </location>
</feature>
<feature type="strand" evidence="35">
    <location>
        <begin position="660"/>
        <end position="665"/>
    </location>
</feature>
<feature type="helix" evidence="35">
    <location>
        <begin position="672"/>
        <end position="674"/>
    </location>
</feature>
<feature type="strand" evidence="35">
    <location>
        <begin position="678"/>
        <end position="682"/>
    </location>
</feature>
<comment type="function">
    <text evidence="5 6 7 9 11">S-adenosyl-L-methionine-dependent methyltransferase that adds a methylphosphate cap at the 5'-end of 7SK snRNA (7SK RNA), leading to stabilize it (PubMed:17643375, PubMed:19906723, PubMed:30559425). Also has a non-enzymatic function as part of the 7SK RNP complex: the 7SK RNP complex sequesters the positive transcription elongation factor b (P-TEFb) in a large inactive 7SK RNP complex preventing RNA polymerase II phosphorylation and subsequent transcriptional elongation (PubMed:17643375). The 7SK RNP complex also promotes snRNA gene transcription by RNA polymerase II via interaction with the little elongation complex (LEC) (PubMed:28254838). In the 7SK RNP complex, MEPCE is required to stabilize 7SK RNA and facilitate the assembly of 7SK RNP complex (PubMed:19906723, PubMed:38100593). MEPCE has a non-enzymatic function in the 7SK RNP complex; interaction with LARP7 within the 7SK RNP complex occluding its catalytic center (PubMed:19906723). Also required for stability of U6 snRNAs (PubMed:38100593).</text>
</comment>
<comment type="catalytic activity">
    <reaction evidence="5 6 9">
        <text>a 5'-end triphospho-guanosine-ribonucleotide-snRNA + S-adenosyl-L-methionine = a 5'-end methyltriphosphate-guanosine-ribonucleotide-snRNA + S-adenosyl-L-homocysteine</text>
        <dbReference type="Rhea" id="RHEA:58780"/>
        <dbReference type="Rhea" id="RHEA-COMP:15220"/>
        <dbReference type="Rhea" id="RHEA-COMP:15221"/>
        <dbReference type="ChEBI" id="CHEBI:57856"/>
        <dbReference type="ChEBI" id="CHEBI:59789"/>
        <dbReference type="ChEBI" id="CHEBI:138278"/>
        <dbReference type="ChEBI" id="CHEBI:142789"/>
    </reaction>
    <physiologicalReaction direction="left-to-right" evidence="5 6 9">
        <dbReference type="Rhea" id="RHEA:58781"/>
    </physiologicalReaction>
</comment>
<comment type="subunit">
    <text evidence="5 6 8 10">Core component of the 7SK RNP complex, at least composed of 7SK RNA, LARP7, MEPCE, HEXIM1 (or HEXIM2) and P-TEFb (composed of CDK9 and CCNT1/cyclin-T1) (PubMed:17643375, PubMed:19906723). Interacts with METTL16 (PubMed:29051200). Interacts with RBM7; upon genotoxic stress this interaction is enhanced, triggering the release of inactive P-TEFb complex from the core, yielding to P-TEFb complex activation (PubMed:30824372).</text>
</comment>
<comment type="subcellular location">
    <subcellularLocation>
        <location evidence="6">Nucleus</location>
    </subcellularLocation>
</comment>
<comment type="alternative products">
    <event type="alternative splicing"/>
    <isoform>
        <id>Q7L2J0-1</id>
        <name>1</name>
        <sequence type="displayed"/>
    </isoform>
    <isoform>
        <id>Q7L2J0-2</id>
        <name>2</name>
        <sequence type="described" ref="VSP_044512"/>
    </isoform>
</comment>
<comment type="tissue specificity">
    <text evidence="4">Expressed in chronic myeloid leukemia cells, adrenal gland, brain, cerebellum, kidney, lung, mammary gland and testis (PubMed:12358911). Weakly or not expressed in other tissues (PubMed:12358911).</text>
</comment>
<comment type="PTM">
    <text evidence="12">Dephosphorylated at Ser-152 by the PNUTS-PP1 complex, promoting RNA polymerase II transcription pause-release.</text>
</comment>
<comment type="similarity">
    <text evidence="17">Belongs to the methyltransferase superfamily.</text>
</comment>
<comment type="sequence caution" evidence="17">
    <conflict type="erroneous initiation">
        <sequence resource="EMBL-CDS" id="AAF74767"/>
    </conflict>
</comment>
<comment type="sequence caution" evidence="17">
    <conflict type="erroneous initiation">
        <sequence resource="EMBL-CDS" id="AAH16396"/>
    </conflict>
</comment>
<comment type="sequence caution" evidence="17">
    <conflict type="erroneous initiation">
        <sequence resource="EMBL-CDS" id="BAA91040"/>
    </conflict>
</comment>
<organism>
    <name type="scientific">Homo sapiens</name>
    <name type="common">Human</name>
    <dbReference type="NCBI Taxonomy" id="9606"/>
    <lineage>
        <taxon>Eukaryota</taxon>
        <taxon>Metazoa</taxon>
        <taxon>Chordata</taxon>
        <taxon>Craniata</taxon>
        <taxon>Vertebrata</taxon>
        <taxon>Euteleostomi</taxon>
        <taxon>Mammalia</taxon>
        <taxon>Eutheria</taxon>
        <taxon>Euarchontoglires</taxon>
        <taxon>Primates</taxon>
        <taxon>Haplorrhini</taxon>
        <taxon>Catarrhini</taxon>
        <taxon>Hominidae</taxon>
        <taxon>Homo</taxon>
    </lineage>
</organism>
<name>MEPCE_HUMAN</name>
<evidence type="ECO:0000250" key="1">
    <source>
        <dbReference type="UniProtKB" id="Q8K3A9"/>
    </source>
</evidence>
<evidence type="ECO:0000255" key="2">
    <source>
        <dbReference type="PROSITE-ProRule" id="PRU00848"/>
    </source>
</evidence>
<evidence type="ECO:0000256" key="3">
    <source>
        <dbReference type="SAM" id="MobiDB-lite"/>
    </source>
</evidence>
<evidence type="ECO:0000269" key="4">
    <source>
    </source>
</evidence>
<evidence type="ECO:0000269" key="5">
    <source>
    </source>
</evidence>
<evidence type="ECO:0000269" key="6">
    <source>
    </source>
</evidence>
<evidence type="ECO:0000269" key="7">
    <source>
    </source>
</evidence>
<evidence type="ECO:0000269" key="8">
    <source>
    </source>
</evidence>
<evidence type="ECO:0000269" key="9">
    <source>
    </source>
</evidence>
<evidence type="ECO:0000269" key="10">
    <source>
    </source>
</evidence>
<evidence type="ECO:0000269" key="11">
    <source>
    </source>
</evidence>
<evidence type="ECO:0000269" key="12">
    <source>
    </source>
</evidence>
<evidence type="ECO:0000269" key="13">
    <source ref="28"/>
</evidence>
<evidence type="ECO:0000303" key="14">
    <source>
    </source>
</evidence>
<evidence type="ECO:0000303" key="15">
    <source>
    </source>
</evidence>
<evidence type="ECO:0000303" key="16">
    <source>
    </source>
</evidence>
<evidence type="ECO:0000305" key="17"/>
<evidence type="ECO:0000312" key="18">
    <source>
        <dbReference type="HGNC" id="HGNC:20247"/>
    </source>
</evidence>
<evidence type="ECO:0007744" key="19">
    <source>
        <dbReference type="PDB" id="5UNA"/>
    </source>
</evidence>
<evidence type="ECO:0007744" key="20">
    <source>
        <dbReference type="PDB" id="6DCB"/>
    </source>
</evidence>
<evidence type="ECO:0007744" key="21">
    <source>
        <dbReference type="PDB" id="6DCC"/>
    </source>
</evidence>
<evidence type="ECO:0007744" key="22">
    <source>
    </source>
</evidence>
<evidence type="ECO:0007744" key="23">
    <source>
    </source>
</evidence>
<evidence type="ECO:0007744" key="24">
    <source>
    </source>
</evidence>
<evidence type="ECO:0007744" key="25">
    <source>
    </source>
</evidence>
<evidence type="ECO:0007744" key="26">
    <source>
    </source>
</evidence>
<evidence type="ECO:0007744" key="27">
    <source>
    </source>
</evidence>
<evidence type="ECO:0007744" key="28">
    <source>
    </source>
</evidence>
<evidence type="ECO:0007744" key="29">
    <source>
    </source>
</evidence>
<evidence type="ECO:0007744" key="30">
    <source>
    </source>
</evidence>
<evidence type="ECO:0007744" key="31">
    <source>
    </source>
</evidence>
<evidence type="ECO:0007744" key="32">
    <source>
    </source>
</evidence>
<evidence type="ECO:0007744" key="33">
    <source>
    </source>
</evidence>
<evidence type="ECO:0007744" key="34">
    <source>
    </source>
</evidence>
<evidence type="ECO:0007829" key="35">
    <source>
        <dbReference type="PDB" id="6DCB"/>
    </source>
</evidence>
<proteinExistence type="evidence at protein level"/>
<reference key="1">
    <citation type="journal article" date="2004" name="Nat. Genet.">
        <title>Complete sequencing and characterization of 21,243 full-length human cDNAs.</title>
        <authorList>
            <person name="Ota T."/>
            <person name="Suzuki Y."/>
            <person name="Nishikawa T."/>
            <person name="Otsuki T."/>
            <person name="Sugiyama T."/>
            <person name="Irie R."/>
            <person name="Wakamatsu A."/>
            <person name="Hayashi K."/>
            <person name="Sato H."/>
            <person name="Nagai K."/>
            <person name="Kimura K."/>
            <person name="Makita H."/>
            <person name="Sekine M."/>
            <person name="Obayashi M."/>
            <person name="Nishi T."/>
            <person name="Shibahara T."/>
            <person name="Tanaka T."/>
            <person name="Ishii S."/>
            <person name="Yamamoto J."/>
            <person name="Saito K."/>
            <person name="Kawai Y."/>
            <person name="Isono Y."/>
            <person name="Nakamura Y."/>
            <person name="Nagahari K."/>
            <person name="Murakami K."/>
            <person name="Yasuda T."/>
            <person name="Iwayanagi T."/>
            <person name="Wagatsuma M."/>
            <person name="Shiratori A."/>
            <person name="Sudo H."/>
            <person name="Hosoiri T."/>
            <person name="Kaku Y."/>
            <person name="Kodaira H."/>
            <person name="Kondo H."/>
            <person name="Sugawara M."/>
            <person name="Takahashi M."/>
            <person name="Kanda K."/>
            <person name="Yokoi T."/>
            <person name="Furuya T."/>
            <person name="Kikkawa E."/>
            <person name="Omura Y."/>
            <person name="Abe K."/>
            <person name="Kamihara K."/>
            <person name="Katsuta N."/>
            <person name="Sato K."/>
            <person name="Tanikawa M."/>
            <person name="Yamazaki M."/>
            <person name="Ninomiya K."/>
            <person name="Ishibashi T."/>
            <person name="Yamashita H."/>
            <person name="Murakawa K."/>
            <person name="Fujimori K."/>
            <person name="Tanai H."/>
            <person name="Kimata M."/>
            <person name="Watanabe M."/>
            <person name="Hiraoka S."/>
            <person name="Chiba Y."/>
            <person name="Ishida S."/>
            <person name="Ono Y."/>
            <person name="Takiguchi S."/>
            <person name="Watanabe S."/>
            <person name="Yosida M."/>
            <person name="Hotuta T."/>
            <person name="Kusano J."/>
            <person name="Kanehori K."/>
            <person name="Takahashi-Fujii A."/>
            <person name="Hara H."/>
            <person name="Tanase T.-O."/>
            <person name="Nomura Y."/>
            <person name="Togiya S."/>
            <person name="Komai F."/>
            <person name="Hara R."/>
            <person name="Takeuchi K."/>
            <person name="Arita M."/>
            <person name="Imose N."/>
            <person name="Musashino K."/>
            <person name="Yuuki H."/>
            <person name="Oshima A."/>
            <person name="Sasaki N."/>
            <person name="Aotsuka S."/>
            <person name="Yoshikawa Y."/>
            <person name="Matsunawa H."/>
            <person name="Ichihara T."/>
            <person name="Shiohata N."/>
            <person name="Sano S."/>
            <person name="Moriya S."/>
            <person name="Momiyama H."/>
            <person name="Satoh N."/>
            <person name="Takami S."/>
            <person name="Terashima Y."/>
            <person name="Suzuki O."/>
            <person name="Nakagawa S."/>
            <person name="Senoh A."/>
            <person name="Mizoguchi H."/>
            <person name="Goto Y."/>
            <person name="Shimizu F."/>
            <person name="Wakebe H."/>
            <person name="Hishigaki H."/>
            <person name="Watanabe T."/>
            <person name="Sugiyama A."/>
            <person name="Takemoto M."/>
            <person name="Kawakami B."/>
            <person name="Yamazaki M."/>
            <person name="Watanabe K."/>
            <person name="Kumagai A."/>
            <person name="Itakura S."/>
            <person name="Fukuzumi Y."/>
            <person name="Fujimori Y."/>
            <person name="Komiyama M."/>
            <person name="Tashiro H."/>
            <person name="Tanigami A."/>
            <person name="Fujiwara T."/>
            <person name="Ono T."/>
            <person name="Yamada K."/>
            <person name="Fujii Y."/>
            <person name="Ozaki K."/>
            <person name="Hirao M."/>
            <person name="Ohmori Y."/>
            <person name="Kawabata A."/>
            <person name="Hikiji T."/>
            <person name="Kobatake N."/>
            <person name="Inagaki H."/>
            <person name="Ikema Y."/>
            <person name="Okamoto S."/>
            <person name="Okitani R."/>
            <person name="Kawakami T."/>
            <person name="Noguchi S."/>
            <person name="Itoh T."/>
            <person name="Shigeta K."/>
            <person name="Senba T."/>
            <person name="Matsumura K."/>
            <person name="Nakajima Y."/>
            <person name="Mizuno T."/>
            <person name="Morinaga M."/>
            <person name="Sasaki M."/>
            <person name="Togashi T."/>
            <person name="Oyama M."/>
            <person name="Hata H."/>
            <person name="Watanabe M."/>
            <person name="Komatsu T."/>
            <person name="Mizushima-Sugano J."/>
            <person name="Satoh T."/>
            <person name="Shirai Y."/>
            <person name="Takahashi Y."/>
            <person name="Nakagawa K."/>
            <person name="Okumura K."/>
            <person name="Nagase T."/>
            <person name="Nomura N."/>
            <person name="Kikuchi H."/>
            <person name="Masuho Y."/>
            <person name="Yamashita R."/>
            <person name="Nakai K."/>
            <person name="Yada T."/>
            <person name="Nakamura Y."/>
            <person name="Ohara O."/>
            <person name="Isogai T."/>
            <person name="Sugano S."/>
        </authorList>
    </citation>
    <scope>NUCLEOTIDE SEQUENCE [LARGE SCALE MRNA] (ISOFORM 2)</scope>
    <scope>NUCLEOTIDE SEQUENCE [LARGE SCALE MRNA] OF 320-689 (ISOFORM 1)</scope>
    <source>
        <tissue>Colon mucosa</tissue>
    </source>
</reference>
<reference key="2">
    <citation type="journal article" date="2003" name="Nature">
        <title>The DNA sequence of human chromosome 7.</title>
        <authorList>
            <person name="Hillier L.W."/>
            <person name="Fulton R.S."/>
            <person name="Fulton L.A."/>
            <person name="Graves T.A."/>
            <person name="Pepin K.H."/>
            <person name="Wagner-McPherson C."/>
            <person name="Layman D."/>
            <person name="Maas J."/>
            <person name="Jaeger S."/>
            <person name="Walker R."/>
            <person name="Wylie K."/>
            <person name="Sekhon M."/>
            <person name="Becker M.C."/>
            <person name="O'Laughlin M.D."/>
            <person name="Schaller M.E."/>
            <person name="Fewell G.A."/>
            <person name="Delehaunty K.D."/>
            <person name="Miner T.L."/>
            <person name="Nash W.E."/>
            <person name="Cordes M."/>
            <person name="Du H."/>
            <person name="Sun H."/>
            <person name="Edwards J."/>
            <person name="Bradshaw-Cordum H."/>
            <person name="Ali J."/>
            <person name="Andrews S."/>
            <person name="Isak A."/>
            <person name="Vanbrunt A."/>
            <person name="Nguyen C."/>
            <person name="Du F."/>
            <person name="Lamar B."/>
            <person name="Courtney L."/>
            <person name="Kalicki J."/>
            <person name="Ozersky P."/>
            <person name="Bielicki L."/>
            <person name="Scott K."/>
            <person name="Holmes A."/>
            <person name="Harkins R."/>
            <person name="Harris A."/>
            <person name="Strong C.M."/>
            <person name="Hou S."/>
            <person name="Tomlinson C."/>
            <person name="Dauphin-Kohlberg S."/>
            <person name="Kozlowicz-Reilly A."/>
            <person name="Leonard S."/>
            <person name="Rohlfing T."/>
            <person name="Rock S.M."/>
            <person name="Tin-Wollam A.-M."/>
            <person name="Abbott A."/>
            <person name="Minx P."/>
            <person name="Maupin R."/>
            <person name="Strowmatt C."/>
            <person name="Latreille P."/>
            <person name="Miller N."/>
            <person name="Johnson D."/>
            <person name="Murray J."/>
            <person name="Woessner J.P."/>
            <person name="Wendl M.C."/>
            <person name="Yang S.-P."/>
            <person name="Schultz B.R."/>
            <person name="Wallis J.W."/>
            <person name="Spieth J."/>
            <person name="Bieri T.A."/>
            <person name="Nelson J.O."/>
            <person name="Berkowicz N."/>
            <person name="Wohldmann P.E."/>
            <person name="Cook L.L."/>
            <person name="Hickenbotham M.T."/>
            <person name="Eldred J."/>
            <person name="Williams D."/>
            <person name="Bedell J.A."/>
            <person name="Mardis E.R."/>
            <person name="Clifton S.W."/>
            <person name="Chissoe S.L."/>
            <person name="Marra M.A."/>
            <person name="Raymond C."/>
            <person name="Haugen E."/>
            <person name="Gillett W."/>
            <person name="Zhou Y."/>
            <person name="James R."/>
            <person name="Phelps K."/>
            <person name="Iadanoto S."/>
            <person name="Bubb K."/>
            <person name="Simms E."/>
            <person name="Levy R."/>
            <person name="Clendenning J."/>
            <person name="Kaul R."/>
            <person name="Kent W.J."/>
            <person name="Furey T.S."/>
            <person name="Baertsch R.A."/>
            <person name="Brent M.R."/>
            <person name="Keibler E."/>
            <person name="Flicek P."/>
            <person name="Bork P."/>
            <person name="Suyama M."/>
            <person name="Bailey J.A."/>
            <person name="Portnoy M.E."/>
            <person name="Torrents D."/>
            <person name="Chinwalla A.T."/>
            <person name="Gish W.R."/>
            <person name="Eddy S.R."/>
            <person name="McPherson J.D."/>
            <person name="Olson M.V."/>
            <person name="Eichler E.E."/>
            <person name="Green E.D."/>
            <person name="Waterston R.H."/>
            <person name="Wilson R.K."/>
        </authorList>
    </citation>
    <scope>NUCLEOTIDE SEQUENCE [LARGE SCALE GENOMIC DNA]</scope>
</reference>
<reference key="3">
    <citation type="journal article" date="2003" name="Science">
        <title>Human chromosome 7: DNA sequence and biology.</title>
        <authorList>
            <person name="Scherer S.W."/>
            <person name="Cheung J."/>
            <person name="MacDonald J.R."/>
            <person name="Osborne L.R."/>
            <person name="Nakabayashi K."/>
            <person name="Herbrick J.-A."/>
            <person name="Carson A.R."/>
            <person name="Parker-Katiraee L."/>
            <person name="Skaug J."/>
            <person name="Khaja R."/>
            <person name="Zhang J."/>
            <person name="Hudek A.K."/>
            <person name="Li M."/>
            <person name="Haddad M."/>
            <person name="Duggan G.E."/>
            <person name="Fernandez B.A."/>
            <person name="Kanematsu E."/>
            <person name="Gentles S."/>
            <person name="Christopoulos C.C."/>
            <person name="Choufani S."/>
            <person name="Kwasnicka D."/>
            <person name="Zheng X.H."/>
            <person name="Lai Z."/>
            <person name="Nusskern D.R."/>
            <person name="Zhang Q."/>
            <person name="Gu Z."/>
            <person name="Lu F."/>
            <person name="Zeesman S."/>
            <person name="Nowaczyk M.J."/>
            <person name="Teshima I."/>
            <person name="Chitayat D."/>
            <person name="Shuman C."/>
            <person name="Weksberg R."/>
            <person name="Zackai E.H."/>
            <person name="Grebe T.A."/>
            <person name="Cox S.R."/>
            <person name="Kirkpatrick S.J."/>
            <person name="Rahman N."/>
            <person name="Friedman J.M."/>
            <person name="Heng H.H.Q."/>
            <person name="Pelicci P.G."/>
            <person name="Lo-Coco F."/>
            <person name="Belloni E."/>
            <person name="Shaffer L.G."/>
            <person name="Pober B."/>
            <person name="Morton C.C."/>
            <person name="Gusella J.F."/>
            <person name="Bruns G.A.P."/>
            <person name="Korf B.R."/>
            <person name="Quade B.J."/>
            <person name="Ligon A.H."/>
            <person name="Ferguson H."/>
            <person name="Higgins A.W."/>
            <person name="Leach N.T."/>
            <person name="Herrick S.R."/>
            <person name="Lemyre E."/>
            <person name="Farra C.G."/>
            <person name="Kim H.-G."/>
            <person name="Summers A.M."/>
            <person name="Gripp K.W."/>
            <person name="Roberts W."/>
            <person name="Szatmari P."/>
            <person name="Winsor E.J.T."/>
            <person name="Grzeschik K.-H."/>
            <person name="Teebi A."/>
            <person name="Minassian B.A."/>
            <person name="Kere J."/>
            <person name="Armengol L."/>
            <person name="Pujana M.A."/>
            <person name="Estivill X."/>
            <person name="Wilson M.D."/>
            <person name="Koop B.F."/>
            <person name="Tosi S."/>
            <person name="Moore G.E."/>
            <person name="Boright A.P."/>
            <person name="Zlotorynski E."/>
            <person name="Kerem B."/>
            <person name="Kroisel P.M."/>
            <person name="Petek E."/>
            <person name="Oscier D.G."/>
            <person name="Mould S.J."/>
            <person name="Doehner H."/>
            <person name="Doehner K."/>
            <person name="Rommens J.M."/>
            <person name="Vincent J.B."/>
            <person name="Venter J.C."/>
            <person name="Li P.W."/>
            <person name="Mural R.J."/>
            <person name="Adams M.D."/>
            <person name="Tsui L.-C."/>
        </authorList>
    </citation>
    <scope>NUCLEOTIDE SEQUENCE [LARGE SCALE GENOMIC DNA]</scope>
</reference>
<reference key="4">
    <citation type="journal article" date="2004" name="Genome Res.">
        <title>The status, quality, and expansion of the NIH full-length cDNA project: the Mammalian Gene Collection (MGC).</title>
        <authorList>
            <consortium name="The MGC Project Team"/>
        </authorList>
    </citation>
    <scope>NUCLEOTIDE SEQUENCE [LARGE SCALE MRNA] (ISOFORM 1)</scope>
    <source>
        <tissue>Brain</tissue>
    </source>
</reference>
<reference key="5">
    <citation type="journal article" date="2002" name="Br. J. Haematol.">
        <title>Identification and characterization of a novel gene encoding a SEREX antigen in chronic myeloid leukaemia.</title>
        <authorList>
            <person name="Rogers S.A."/>
            <person name="Bowen D.J."/>
            <person name="Ling M."/>
            <person name="Thomson P."/>
            <person name="Wang Z."/>
            <person name="Lim S.H."/>
        </authorList>
    </citation>
    <scope>NUCLEOTIDE SEQUENCE [GENOMIC DNA] OF 73-689</scope>
    <scope>TISSUE SPECIFICITY</scope>
</reference>
<reference key="6">
    <citation type="journal article" date="2005" name="Nat. Biotechnol.">
        <title>Immunoaffinity profiling of tyrosine phosphorylation in cancer cells.</title>
        <authorList>
            <person name="Rush J."/>
            <person name="Moritz A."/>
            <person name="Lee K.A."/>
            <person name="Guo A."/>
            <person name="Goss V.L."/>
            <person name="Spek E.J."/>
            <person name="Zhang H."/>
            <person name="Zha X.-M."/>
            <person name="Polakiewicz R.D."/>
            <person name="Comb M.J."/>
        </authorList>
    </citation>
    <scope>IDENTIFICATION BY MASS SPECTROMETRY [LARGE SCALE ANALYSIS]</scope>
</reference>
<reference key="7">
    <citation type="journal article" date="2006" name="Cell">
        <title>Global, in vivo, and site-specific phosphorylation dynamics in signaling networks.</title>
        <authorList>
            <person name="Olsen J.V."/>
            <person name="Blagoev B."/>
            <person name="Gnad F."/>
            <person name="Macek B."/>
            <person name="Kumar C."/>
            <person name="Mortensen P."/>
            <person name="Mann M."/>
        </authorList>
    </citation>
    <scope>PHOSPHORYLATION [LARGE SCALE ANALYSIS] AT SER-69 AND SER-175</scope>
    <scope>IDENTIFICATION BY MASS SPECTROMETRY [LARGE SCALE ANALYSIS]</scope>
    <source>
        <tissue>Cervix carcinoma</tissue>
    </source>
</reference>
<reference key="8">
    <citation type="journal article" date="2006" name="Nat. Biotechnol.">
        <title>A probability-based approach for high-throughput protein phosphorylation analysis and site localization.</title>
        <authorList>
            <person name="Beausoleil S.A."/>
            <person name="Villen J."/>
            <person name="Gerber S.A."/>
            <person name="Rush J."/>
            <person name="Gygi S.P."/>
        </authorList>
    </citation>
    <scope>PHOSPHORYLATION [LARGE SCALE ANALYSIS] AT SER-217</scope>
    <scope>IDENTIFICATION BY MASS SPECTROMETRY [LARGE SCALE ANALYSIS]</scope>
    <source>
        <tissue>Cervix carcinoma</tissue>
    </source>
</reference>
<reference key="9">
    <citation type="journal article" date="2007" name="Mol. Cell">
        <title>Systematic analysis of the protein interaction network for the human transcription machinery reveals the identity of the 7SK capping enzyme.</title>
        <authorList>
            <person name="Jeronimo C."/>
            <person name="Forget D."/>
            <person name="Bouchard A."/>
            <person name="Li Q."/>
            <person name="Chua G."/>
            <person name="Poitras C."/>
            <person name="Therien C."/>
            <person name="Bergeron D."/>
            <person name="Bourassa S."/>
            <person name="Greenblatt J."/>
            <person name="Chabot B."/>
            <person name="Poirier G.G."/>
            <person name="Hughes T.R."/>
            <person name="Blanchette M."/>
            <person name="Price D.H."/>
            <person name="Coulombe B."/>
        </authorList>
    </citation>
    <scope>FUNCTION</scope>
    <scope>IDENTIFICATION IN THE 7SK RNP COMPLEX</scope>
    <scope>CATALYTIC ACTIVITY</scope>
</reference>
<reference key="10">
    <citation type="journal article" date="2008" name="J. Proteome Res.">
        <title>Combining protein-based IMAC, peptide-based IMAC, and MudPIT for efficient phosphoproteomic analysis.</title>
        <authorList>
            <person name="Cantin G.T."/>
            <person name="Yi W."/>
            <person name="Lu B."/>
            <person name="Park S.K."/>
            <person name="Xu T."/>
            <person name="Lee J.-D."/>
            <person name="Yates J.R. III"/>
        </authorList>
    </citation>
    <scope>PHOSPHORYLATION [LARGE SCALE ANALYSIS] AT SER-175 AND SER-179</scope>
    <scope>IDENTIFICATION BY MASS SPECTROMETRY [LARGE SCALE ANALYSIS]</scope>
    <source>
        <tissue>Cervix carcinoma</tissue>
    </source>
</reference>
<reference key="11">
    <citation type="journal article" date="2008" name="Mol. Cell">
        <title>Kinase-selective enrichment enables quantitative phosphoproteomics of the kinome across the cell cycle.</title>
        <authorList>
            <person name="Daub H."/>
            <person name="Olsen J.V."/>
            <person name="Bairlein M."/>
            <person name="Gnad F."/>
            <person name="Oppermann F.S."/>
            <person name="Korner R."/>
            <person name="Greff Z."/>
            <person name="Keri G."/>
            <person name="Stemmann O."/>
            <person name="Mann M."/>
        </authorList>
    </citation>
    <scope>PHOSPHORYLATION [LARGE SCALE ANALYSIS] AT SER-57; SER-60; SER-69; SER-152; SER-175; SER-254 AND SER-330</scope>
    <scope>IDENTIFICATION BY MASS SPECTROMETRY [LARGE SCALE ANALYSIS]</scope>
    <source>
        <tissue>Cervix carcinoma</tissue>
    </source>
</reference>
<reference key="12">
    <citation type="journal article" date="2008" name="Proc. Natl. Acad. Sci. U.S.A.">
        <title>A quantitative atlas of mitotic phosphorylation.</title>
        <authorList>
            <person name="Dephoure N."/>
            <person name="Zhou C."/>
            <person name="Villen J."/>
            <person name="Beausoleil S.A."/>
            <person name="Bakalarski C.E."/>
            <person name="Elledge S.J."/>
            <person name="Gygi S.P."/>
        </authorList>
    </citation>
    <scope>PHOSPHORYLATION [LARGE SCALE ANALYSIS] AT SER-60; SER-69; THR-213; SER-216; SER-217 AND SER-254</scope>
    <scope>IDENTIFICATION BY MASS SPECTROMETRY [LARGE SCALE ANALYSIS]</scope>
    <source>
        <tissue>Cervix carcinoma</tissue>
    </source>
</reference>
<reference key="13">
    <citation type="journal article" date="2009" name="Anal. Chem.">
        <title>Lys-N and trypsin cover complementary parts of the phosphoproteome in a refined SCX-based approach.</title>
        <authorList>
            <person name="Gauci S."/>
            <person name="Helbig A.O."/>
            <person name="Slijper M."/>
            <person name="Krijgsveld J."/>
            <person name="Heck A.J."/>
            <person name="Mohammed S."/>
        </authorList>
    </citation>
    <scope>ACETYLATION [LARGE SCALE ANALYSIS] AT MET-1</scope>
    <scope>IDENTIFICATION BY MASS SPECTROMETRY [LARGE SCALE ANALYSIS]</scope>
</reference>
<reference key="14">
    <citation type="journal article" date="2009" name="Mol. Cell. Proteomics">
        <title>Large-scale proteomics analysis of the human kinome.</title>
        <authorList>
            <person name="Oppermann F.S."/>
            <person name="Gnad F."/>
            <person name="Olsen J.V."/>
            <person name="Hornberger R."/>
            <person name="Greff Z."/>
            <person name="Keri G."/>
            <person name="Mann M."/>
            <person name="Daub H."/>
        </authorList>
    </citation>
    <scope>PHOSPHORYLATION [LARGE SCALE ANALYSIS] AT SER-254</scope>
    <scope>IDENTIFICATION BY MASS SPECTROMETRY [LARGE SCALE ANALYSIS]</scope>
</reference>
<reference key="15">
    <citation type="journal article" date="2009" name="Sci. Signal.">
        <title>Quantitative phosphoproteomic analysis of T cell receptor signaling reveals system-wide modulation of protein-protein interactions.</title>
        <authorList>
            <person name="Mayya V."/>
            <person name="Lundgren D.H."/>
            <person name="Hwang S.-I."/>
            <person name="Rezaul K."/>
            <person name="Wu L."/>
            <person name="Eng J.K."/>
            <person name="Rodionov V."/>
            <person name="Han D.K."/>
        </authorList>
    </citation>
    <scope>PHOSPHORYLATION [LARGE SCALE ANALYSIS] AT THR-213</scope>
    <scope>IDENTIFICATION BY MASS SPECTROMETRY [LARGE SCALE ANALYSIS]</scope>
    <source>
        <tissue>Leukemic T-cell</tissue>
    </source>
</reference>
<reference key="16">
    <citation type="journal article" date="2010" name="Nucleic Acids Res.">
        <title>A capping-independent function of MePCE in stabilizing 7SK snRNA and facilitating the assembly of 7SK snRNP.</title>
        <authorList>
            <person name="Xue Y."/>
            <person name="Yang Z."/>
            <person name="Chen R."/>
            <person name="Zhou Q."/>
        </authorList>
    </citation>
    <scope>FUNCTION</scope>
    <scope>SUBCELLULAR LOCATION</scope>
    <scope>CATALYTIC ACTIVITY</scope>
    <scope>IDENTIFICATION IN THE 7SK RNP COMPLEX</scope>
    <scope>MUTAGENESIS OF 447-VAL--ASP-449</scope>
</reference>
<reference key="17">
    <citation type="journal article" date="2010" name="Sci. Signal.">
        <title>Quantitative phosphoproteomics reveals widespread full phosphorylation site occupancy during mitosis.</title>
        <authorList>
            <person name="Olsen J.V."/>
            <person name="Vermeulen M."/>
            <person name="Santamaria A."/>
            <person name="Kumar C."/>
            <person name="Miller M.L."/>
            <person name="Jensen L.J."/>
            <person name="Gnad F."/>
            <person name="Cox J."/>
            <person name="Jensen T.S."/>
            <person name="Nigg E.A."/>
            <person name="Brunak S."/>
            <person name="Mann M."/>
        </authorList>
    </citation>
    <scope>PHOSPHORYLATION [LARGE SCALE ANALYSIS] AT SER-69; SER-101; THR-213; SER-216; SER-217; SER-254 AND SER-390</scope>
    <scope>IDENTIFICATION BY MASS SPECTROMETRY [LARGE SCALE ANALYSIS]</scope>
    <source>
        <tissue>Cervix carcinoma</tissue>
    </source>
</reference>
<reference key="18">
    <citation type="journal article" date="2011" name="BMC Syst. Biol.">
        <title>Initial characterization of the human central proteome.</title>
        <authorList>
            <person name="Burkard T.R."/>
            <person name="Planyavsky M."/>
            <person name="Kaupe I."/>
            <person name="Breitwieser F.P."/>
            <person name="Buerckstuemmer T."/>
            <person name="Bennett K.L."/>
            <person name="Superti-Furga G."/>
            <person name="Colinge J."/>
        </authorList>
    </citation>
    <scope>IDENTIFICATION BY MASS SPECTROMETRY [LARGE SCALE ANALYSIS]</scope>
</reference>
<reference key="19">
    <citation type="journal article" date="2011" name="Sci. Signal.">
        <title>System-wide temporal characterization of the proteome and phosphoproteome of human embryonic stem cell differentiation.</title>
        <authorList>
            <person name="Rigbolt K.T."/>
            <person name="Prokhorova T.A."/>
            <person name="Akimov V."/>
            <person name="Henningsen J."/>
            <person name="Johansen P.T."/>
            <person name="Kratchmarova I."/>
            <person name="Kassem M."/>
            <person name="Mann M."/>
            <person name="Olsen J.V."/>
            <person name="Blagoev B."/>
        </authorList>
    </citation>
    <scope>PHOSPHORYLATION [LARGE SCALE ANALYSIS] AT THR-213</scope>
    <scope>IDENTIFICATION BY MASS SPECTROMETRY [LARGE SCALE ANALYSIS]</scope>
</reference>
<reference key="20">
    <citation type="journal article" date="2013" name="J. Proteome Res.">
        <title>Toward a comprehensive characterization of a human cancer cell phosphoproteome.</title>
        <authorList>
            <person name="Zhou H."/>
            <person name="Di Palma S."/>
            <person name="Preisinger C."/>
            <person name="Peng M."/>
            <person name="Polat A.N."/>
            <person name="Heck A.J."/>
            <person name="Mohammed S."/>
        </authorList>
    </citation>
    <scope>PHOSPHORYLATION [LARGE SCALE ANALYSIS] AT SER-60; SER-69; SER-101; SER-152; THR-213; SER-216; SER-217 AND SER-254</scope>
    <scope>IDENTIFICATION BY MASS SPECTROMETRY [LARGE SCALE ANALYSIS]</scope>
    <source>
        <tissue>Cervix carcinoma</tissue>
        <tissue>Erythroleukemia</tissue>
    </source>
</reference>
<reference key="21">
    <citation type="journal article" date="2014" name="J. Proteomics">
        <title>An enzyme assisted RP-RPLC approach for in-depth analysis of human liver phosphoproteome.</title>
        <authorList>
            <person name="Bian Y."/>
            <person name="Song C."/>
            <person name="Cheng K."/>
            <person name="Dong M."/>
            <person name="Wang F."/>
            <person name="Huang J."/>
            <person name="Sun D."/>
            <person name="Wang L."/>
            <person name="Ye M."/>
            <person name="Zou H."/>
        </authorList>
    </citation>
    <scope>PHOSPHORYLATION [LARGE SCALE ANALYSIS] AT SER-60; SER-69; SER-152; THR-213; SER-217; SER-254; THR-291 AND SER-344</scope>
    <scope>IDENTIFICATION BY MASS SPECTROMETRY [LARGE SCALE ANALYSIS]</scope>
    <source>
        <tissue>Liver</tissue>
    </source>
</reference>
<reference key="22">
    <citation type="journal article" date="2017" name="EMBO J.">
        <title>The 7SK snRNP associates with the little elongation complex to promote snRNA gene expression.</title>
        <authorList>
            <person name="Egloff S."/>
            <person name="Vitali P."/>
            <person name="Tellier M."/>
            <person name="Raffel R."/>
            <person name="Murphy S."/>
            <person name="Kiss T."/>
        </authorList>
    </citation>
    <scope>FUNCTION</scope>
</reference>
<reference key="23">
    <citation type="journal article" date="2017" name="EMBO Rep.">
        <title>Human METTL16 is a N6-methyladenosine (m6A) methyltransferase that targets pre-mRNAs and various non-coding RNAs.</title>
        <authorList>
            <person name="Warda A.S."/>
            <person name="Kretschmer J."/>
            <person name="Hackert P."/>
            <person name="Lenz C."/>
            <person name="Urlaub H."/>
            <person name="Hoebartner C."/>
            <person name="Sloan K.E."/>
            <person name="Bohnsack M.T."/>
        </authorList>
    </citation>
    <scope>INTERACTION WITH METTL16</scope>
</reference>
<reference key="24">
    <citation type="journal article" date="2017" name="Nat. Struct. Mol. Biol.">
        <title>Site-specific mapping of the human SUMO proteome reveals co-modification with phosphorylation.</title>
        <authorList>
            <person name="Hendriks I.A."/>
            <person name="Lyon D."/>
            <person name="Young C."/>
            <person name="Jensen L.J."/>
            <person name="Vertegaal A.C."/>
            <person name="Nielsen M.L."/>
        </authorList>
    </citation>
    <scope>SUMOYLATION [LARGE SCALE ANALYSIS] AT LYS-643</scope>
    <scope>IDENTIFICATION BY MASS SPECTROMETRY [LARGE SCALE ANALYSIS]</scope>
</reference>
<reference key="25">
    <citation type="journal article" date="2019" name="Mol. Cell">
        <title>P-TEFb Activation by RBM7 Shapes a Pro-survival Transcriptional Response to Genotoxic Stress.</title>
        <authorList>
            <person name="Bugai A."/>
            <person name="Quaresma A.J.C."/>
            <person name="Friedel C.C."/>
            <person name="Lenasi T."/>
            <person name="Duester R."/>
            <person name="Sibley C.R."/>
            <person name="Fujinaga K."/>
            <person name="Kukanja P."/>
            <person name="Hennig T."/>
            <person name="Blasius M."/>
            <person name="Geyer M."/>
            <person name="Ule J."/>
            <person name="Doelken L."/>
            <person name="Barboric M."/>
        </authorList>
    </citation>
    <scope>INTERACTION WITH RBM7</scope>
</reference>
<reference key="26">
    <citation type="journal article" date="2023" name="Sci. Adv.">
        <title>Drosophila Amus and Bin3 methylases functionally replace mammalian MePCE for capping and the stabilization of U6 and 7SK snRNAs.</title>
        <authorList>
            <person name="Peng Q."/>
            <person name="Wang Y."/>
            <person name="Xiao Y."/>
            <person name="Chang H."/>
            <person name="Luo S."/>
            <person name="Wang D."/>
            <person name="Rong Y.S."/>
        </authorList>
    </citation>
    <scope>FUNCTION</scope>
</reference>
<reference key="27">
    <citation type="journal article" date="2024" name="Mol. Cell">
        <title>The phosphatase PP1 sustains global transcription by promoting RNA polymerase II pause release.</title>
        <authorList>
            <person name="Wang Z."/>
            <person name="Song A."/>
            <person name="Tao B."/>
            <person name="Miao M."/>
            <person name="Luo Y.Q."/>
            <person name="Wang J."/>
            <person name="Yin Z."/>
            <person name="Xiao R."/>
            <person name="Zhou X."/>
            <person name="Shang X.Y."/>
            <person name="Hu S."/>
            <person name="Liang K."/>
            <person name="Danko C.G."/>
            <person name="Chen F.X."/>
        </authorList>
    </citation>
    <scope>PHOSPHORYLATION AT SER-152</scope>
    <scope>DEPHOSPHORYLATION AT SER-152</scope>
    <scope>MUTAGENESIS OF SER-152</scope>
</reference>
<reference key="28">
    <citation type="submission" date="2009-05" db="PDB data bank">
        <title>Methyltransferase domain of human bicoid-interacting protein 3 homolog (drosophila).</title>
        <authorList>
            <consortium name="Structural genomics consortium (SGC)"/>
        </authorList>
    </citation>
    <scope>X-RAY CRYSTALLOGRAPHY (2.65 ANGSTROMS) OF 400-689 IN COMPLEX WITH S-ADENOSYL-L-METHIONINE</scope>
</reference>
<reference evidence="20 21" key="29">
    <citation type="journal article" date="2019" name="Nat. Chem. Biol.">
        <title>Structural basis of 7SK RNA 5'-gamma-phosphate methylation and retention by MePCE.</title>
        <authorList>
            <person name="Yang Y."/>
            <person name="Eichhorn C.D."/>
            <person name="Wang Y."/>
            <person name="Cascio D."/>
            <person name="Feigon J."/>
        </authorList>
    </citation>
    <scope>X-RAY CRYSTALLOGRAPHY (2.00 ANGSTROMS) OF 400-689 IN COMPLEX WITH 7SK RNA AND S-ADENOSYL-L-METHIONINE</scope>
    <scope>FUNCTION</scope>
    <scope>CATALYTIC ACTIVITY</scope>
    <scope>MUTAGENESIS OF TYR-421; LYS-585 AND PHE-674</scope>
</reference>
<keyword id="KW-0002">3D-structure</keyword>
<keyword id="KW-0007">Acetylation</keyword>
<keyword id="KW-0025">Alternative splicing</keyword>
<keyword id="KW-1017">Isopeptide bond</keyword>
<keyword id="KW-0488">Methylation</keyword>
<keyword id="KW-0489">Methyltransferase</keyword>
<keyword id="KW-0539">Nucleus</keyword>
<keyword id="KW-0597">Phosphoprotein</keyword>
<keyword id="KW-1267">Proteomics identification</keyword>
<keyword id="KW-1185">Reference proteome</keyword>
<keyword id="KW-0949">S-adenosyl-L-methionine</keyword>
<keyword id="KW-0808">Transferase</keyword>
<keyword id="KW-0832">Ubl conjugation</keyword>